<gene>
    <name type="primary">ZCCHC7</name>
    <name type="ORF">HSPC086</name>
</gene>
<dbReference type="EMBL" id="AK026264">
    <property type="protein sequence ID" value="BAB15418.1"/>
    <property type="status" value="ALT_SEQ"/>
    <property type="molecule type" value="mRNA"/>
</dbReference>
<dbReference type="EMBL" id="AK074608">
    <property type="protein sequence ID" value="BAC11087.1"/>
    <property type="status" value="ALT_INIT"/>
    <property type="molecule type" value="mRNA"/>
</dbReference>
<dbReference type="EMBL" id="AK315128">
    <property type="protein sequence ID" value="BAG37581.1"/>
    <property type="status" value="ALT_INIT"/>
    <property type="molecule type" value="mRNA"/>
</dbReference>
<dbReference type="EMBL" id="AL512604">
    <property type="status" value="NOT_ANNOTATED_CDS"/>
    <property type="molecule type" value="Genomic_DNA"/>
</dbReference>
<dbReference type="EMBL" id="AL158155">
    <property type="status" value="NOT_ANNOTATED_CDS"/>
    <property type="molecule type" value="Genomic_DNA"/>
</dbReference>
<dbReference type="EMBL" id="CH471071">
    <property type="protein sequence ID" value="EAW58288.1"/>
    <property type="molecule type" value="Genomic_DNA"/>
</dbReference>
<dbReference type="EMBL" id="CH471071">
    <property type="protein sequence ID" value="EAW58289.1"/>
    <property type="molecule type" value="Genomic_DNA"/>
</dbReference>
<dbReference type="EMBL" id="BC022434">
    <property type="protein sequence ID" value="AAH22434.1"/>
    <property type="molecule type" value="mRNA"/>
</dbReference>
<dbReference type="EMBL" id="BC036940">
    <property type="protein sequence ID" value="AAH36940.1"/>
    <property type="status" value="ALT_INIT"/>
    <property type="molecule type" value="mRNA"/>
</dbReference>
<dbReference type="EMBL" id="AF161349">
    <property type="protein sequence ID" value="AAF28909.1"/>
    <property type="molecule type" value="mRNA"/>
</dbReference>
<dbReference type="CCDS" id="CCDS6608.2">
    <molecule id="Q8N3Z6-1"/>
</dbReference>
<dbReference type="RefSeq" id="NP_001276048.1">
    <molecule id="Q8N3Z6-1"/>
    <property type="nucleotide sequence ID" value="NM_001289119.2"/>
</dbReference>
<dbReference type="RefSeq" id="NP_001276049.1">
    <molecule id="Q8N3Z6-1"/>
    <property type="nucleotide sequence ID" value="NM_001289120.2"/>
</dbReference>
<dbReference type="RefSeq" id="NP_001276050.1">
    <molecule id="Q8N3Z6-1"/>
    <property type="nucleotide sequence ID" value="NM_001289121.2"/>
</dbReference>
<dbReference type="RefSeq" id="NP_115602.2">
    <molecule id="Q8N3Z6-1"/>
    <property type="nucleotide sequence ID" value="NM_032226.3"/>
</dbReference>
<dbReference type="RefSeq" id="XP_005251665.1">
    <molecule id="Q8N3Z6-1"/>
    <property type="nucleotide sequence ID" value="XM_005251608.5"/>
</dbReference>
<dbReference type="RefSeq" id="XP_005251669.1">
    <molecule id="Q8N3Z6-1"/>
    <property type="nucleotide sequence ID" value="XM_005251612.4"/>
</dbReference>
<dbReference type="RefSeq" id="XP_054219928.1">
    <molecule id="Q8N3Z6-1"/>
    <property type="nucleotide sequence ID" value="XM_054363953.1"/>
</dbReference>
<dbReference type="RefSeq" id="XP_054219929.1">
    <molecule id="Q8N3Z6-1"/>
    <property type="nucleotide sequence ID" value="XM_054363954.1"/>
</dbReference>
<dbReference type="BioGRID" id="123934">
    <property type="interactions" value="112"/>
</dbReference>
<dbReference type="ComplexPortal" id="CPX-2740">
    <property type="entry name" value="TRAMP complex, TENT4B-ZCCHC7 variant"/>
</dbReference>
<dbReference type="ComplexPortal" id="CPX-2749">
    <property type="entry name" value="TRAMP complex, TENT4A-ZCCHC7 variant"/>
</dbReference>
<dbReference type="ELM" id="Q8N3Z6"/>
<dbReference type="FunCoup" id="Q8N3Z6">
    <property type="interactions" value="3474"/>
</dbReference>
<dbReference type="IntAct" id="Q8N3Z6">
    <property type="interactions" value="48"/>
</dbReference>
<dbReference type="MINT" id="Q8N3Z6"/>
<dbReference type="STRING" id="9606.ENSP00000443113"/>
<dbReference type="iPTMnet" id="Q8N3Z6"/>
<dbReference type="PhosphoSitePlus" id="Q8N3Z6"/>
<dbReference type="BioMuta" id="ZCCHC7"/>
<dbReference type="DMDM" id="226693603"/>
<dbReference type="jPOST" id="Q8N3Z6"/>
<dbReference type="MassIVE" id="Q8N3Z6"/>
<dbReference type="PaxDb" id="9606-ENSP00000443113"/>
<dbReference type="PeptideAtlas" id="Q8N3Z6"/>
<dbReference type="ProteomicsDB" id="71857">
    <molecule id="Q8N3Z6-1"/>
</dbReference>
<dbReference type="ProteomicsDB" id="71858">
    <molecule id="Q8N3Z6-2"/>
</dbReference>
<dbReference type="Pumba" id="Q8N3Z6"/>
<dbReference type="Antibodypedia" id="11966">
    <property type="antibodies" value="88 antibodies from 18 providers"/>
</dbReference>
<dbReference type="DNASU" id="84186"/>
<dbReference type="Ensembl" id="ENST00000336755.10">
    <molecule id="Q8N3Z6-1"/>
    <property type="protein sequence ID" value="ENSP00000337839.5"/>
    <property type="gene ID" value="ENSG00000147905.18"/>
</dbReference>
<dbReference type="Ensembl" id="ENST00000534928.5">
    <molecule id="Q8N3Z6-1"/>
    <property type="protein sequence ID" value="ENSP00000443113.2"/>
    <property type="gene ID" value="ENSG00000147905.18"/>
</dbReference>
<dbReference type="GeneID" id="84186"/>
<dbReference type="KEGG" id="hsa:84186"/>
<dbReference type="MANE-Select" id="ENST00000336755.10">
    <property type="protein sequence ID" value="ENSP00000337839.5"/>
    <property type="RefSeq nucleotide sequence ID" value="NM_032226.3"/>
    <property type="RefSeq protein sequence ID" value="NP_115602.2"/>
</dbReference>
<dbReference type="UCSC" id="uc003zzq.4">
    <molecule id="Q8N3Z6-1"/>
    <property type="organism name" value="human"/>
</dbReference>
<dbReference type="AGR" id="HGNC:26209"/>
<dbReference type="CTD" id="84186"/>
<dbReference type="DisGeNET" id="84186"/>
<dbReference type="GeneCards" id="ZCCHC7"/>
<dbReference type="HGNC" id="HGNC:26209">
    <property type="gene designation" value="ZCCHC7"/>
</dbReference>
<dbReference type="HPA" id="ENSG00000147905">
    <property type="expression patterns" value="Low tissue specificity"/>
</dbReference>
<dbReference type="MalaCards" id="ZCCHC7"/>
<dbReference type="neXtProt" id="NX_Q8N3Z6"/>
<dbReference type="OpenTargets" id="ENSG00000147905"/>
<dbReference type="PharmGKB" id="PA128394734"/>
<dbReference type="VEuPathDB" id="HostDB:ENSG00000147905"/>
<dbReference type="eggNOG" id="KOG4400">
    <property type="taxonomic scope" value="Eukaryota"/>
</dbReference>
<dbReference type="GeneTree" id="ENSGT00950000183041"/>
<dbReference type="HOGENOM" id="CLU_029787_0_0_1"/>
<dbReference type="InParanoid" id="Q8N3Z6"/>
<dbReference type="OMA" id="HFGHACI"/>
<dbReference type="OrthoDB" id="7608935at2759"/>
<dbReference type="PAN-GO" id="Q8N3Z6">
    <property type="GO annotations" value="9 GO annotations based on evolutionary models"/>
</dbReference>
<dbReference type="PhylomeDB" id="Q8N3Z6"/>
<dbReference type="TreeFam" id="TF329448"/>
<dbReference type="PathwayCommons" id="Q8N3Z6"/>
<dbReference type="SignaLink" id="Q8N3Z6"/>
<dbReference type="BioGRID-ORCS" id="84186">
    <property type="hits" value="55 hits in 1153 CRISPR screens"/>
</dbReference>
<dbReference type="CD-CODE" id="91857CE7">
    <property type="entry name" value="Nucleolus"/>
</dbReference>
<dbReference type="ChiTaRS" id="ZCCHC7">
    <property type="organism name" value="human"/>
</dbReference>
<dbReference type="GenomeRNAi" id="84186"/>
<dbReference type="Pharos" id="Q8N3Z6">
    <property type="development level" value="Tbio"/>
</dbReference>
<dbReference type="PRO" id="PR:Q8N3Z6"/>
<dbReference type="Proteomes" id="UP000005640">
    <property type="component" value="Chromosome 9"/>
</dbReference>
<dbReference type="RNAct" id="Q8N3Z6">
    <property type="molecule type" value="protein"/>
</dbReference>
<dbReference type="Bgee" id="ENSG00000147905">
    <property type="expression patterns" value="Expressed in calcaneal tendon and 180 other cell types or tissues"/>
</dbReference>
<dbReference type="ExpressionAtlas" id="Q8N3Z6">
    <property type="expression patterns" value="baseline and differential"/>
</dbReference>
<dbReference type="GO" id="GO:0005829">
    <property type="term" value="C:cytosol"/>
    <property type="evidence" value="ECO:0000314"/>
    <property type="project" value="HPA"/>
</dbReference>
<dbReference type="GO" id="GO:0005730">
    <property type="term" value="C:nucleolus"/>
    <property type="evidence" value="ECO:0000314"/>
    <property type="project" value="HPA"/>
</dbReference>
<dbReference type="GO" id="GO:0031499">
    <property type="term" value="C:TRAMP complex"/>
    <property type="evidence" value="ECO:0000318"/>
    <property type="project" value="GO_Central"/>
</dbReference>
<dbReference type="GO" id="GO:0003723">
    <property type="term" value="F:RNA binding"/>
    <property type="evidence" value="ECO:0007005"/>
    <property type="project" value="UniProtKB"/>
</dbReference>
<dbReference type="GO" id="GO:0008270">
    <property type="term" value="F:zinc ion binding"/>
    <property type="evidence" value="ECO:0007669"/>
    <property type="project" value="UniProtKB-KW"/>
</dbReference>
<dbReference type="GO" id="GO:0071031">
    <property type="term" value="P:nuclear mRNA surveillance of mRNA 3'-end processing"/>
    <property type="evidence" value="ECO:0000318"/>
    <property type="project" value="GO_Central"/>
</dbReference>
<dbReference type="GO" id="GO:0071039">
    <property type="term" value="P:nuclear polyadenylation-dependent CUT catabolic process"/>
    <property type="evidence" value="ECO:0000318"/>
    <property type="project" value="GO_Central"/>
</dbReference>
<dbReference type="GO" id="GO:0071035">
    <property type="term" value="P:nuclear polyadenylation-dependent rRNA catabolic process"/>
    <property type="evidence" value="ECO:0000318"/>
    <property type="project" value="GO_Central"/>
</dbReference>
<dbReference type="GO" id="GO:0071036">
    <property type="term" value="P:nuclear polyadenylation-dependent snoRNA catabolic process"/>
    <property type="evidence" value="ECO:0000318"/>
    <property type="project" value="GO_Central"/>
</dbReference>
<dbReference type="GO" id="GO:0071037">
    <property type="term" value="P:nuclear polyadenylation-dependent snRNA catabolic process"/>
    <property type="evidence" value="ECO:0000318"/>
    <property type="project" value="GO_Central"/>
</dbReference>
<dbReference type="GO" id="GO:0071038">
    <property type="term" value="P:TRAMP-dependent tRNA surveillance pathway"/>
    <property type="evidence" value="ECO:0000318"/>
    <property type="project" value="GO_Central"/>
</dbReference>
<dbReference type="FunFam" id="4.10.60.10:FF:000020">
    <property type="entry name" value="Zinc finger CCHC domain-containing protein 7"/>
    <property type="match status" value="1"/>
</dbReference>
<dbReference type="FunFam" id="4.10.60.10:FF:000041">
    <property type="entry name" value="Zinc finger CCHC domain-containing protein 7"/>
    <property type="match status" value="1"/>
</dbReference>
<dbReference type="Gene3D" id="4.10.60.10">
    <property type="entry name" value="Zinc finger, CCHC-type"/>
    <property type="match status" value="2"/>
</dbReference>
<dbReference type="InterPro" id="IPR051644">
    <property type="entry name" value="TRAMP_AT-DNA-binding"/>
</dbReference>
<dbReference type="InterPro" id="IPR001878">
    <property type="entry name" value="Znf_CCHC"/>
</dbReference>
<dbReference type="InterPro" id="IPR036875">
    <property type="entry name" value="Znf_CCHC_sf"/>
</dbReference>
<dbReference type="PANTHER" id="PTHR46543">
    <property type="entry name" value="ZINC FINGER CCHC DOMAIN-CONTAINING PROTEIN 7"/>
    <property type="match status" value="1"/>
</dbReference>
<dbReference type="PANTHER" id="PTHR46543:SF1">
    <property type="entry name" value="ZINC FINGER CCHC DOMAIN-CONTAINING PROTEIN 7"/>
    <property type="match status" value="1"/>
</dbReference>
<dbReference type="Pfam" id="PF00098">
    <property type="entry name" value="zf-CCHC"/>
    <property type="match status" value="1"/>
</dbReference>
<dbReference type="SMART" id="SM00343">
    <property type="entry name" value="ZnF_C2HC"/>
    <property type="match status" value="4"/>
</dbReference>
<dbReference type="SUPFAM" id="SSF57756">
    <property type="entry name" value="Retrovirus zinc finger-like domains"/>
    <property type="match status" value="1"/>
</dbReference>
<dbReference type="PROSITE" id="PS50158">
    <property type="entry name" value="ZF_CCHC"/>
    <property type="match status" value="3"/>
</dbReference>
<comment type="subunit">
    <text evidence="3">Component of a nucleolar TRAMP-like complex, an ATP-dependent exosome regulatory complex consisting of a helicase (MTREX), an oligadenylate polymerase (TENT4B or TENT4A), and a substrate specific RNA-binding factor (ZCCHC7 or ZCCHC8). Several TRAMP-like complexes exist with specific compositions and are associated with nuclear, or nucleolar RNA exosomes.</text>
</comment>
<comment type="interaction">
    <interactant intactId="EBI-7265024">
        <id>Q8N3Z6</id>
    </interactant>
    <interactant intactId="EBI-751319">
        <id>Q9H257</id>
        <label>CARD9</label>
    </interactant>
    <organismsDiffer>false</organismsDiffer>
    <experiments>3</experiments>
</comment>
<comment type="interaction">
    <interactant intactId="EBI-7265024">
        <id>Q8N3Z6</id>
    </interactant>
    <interactant intactId="EBI-712067">
        <id>Q8TF65</id>
        <label>GIPC2</label>
    </interactant>
    <organismsDiffer>false</organismsDiffer>
    <experiments>3</experiments>
</comment>
<comment type="interaction">
    <interactant intactId="EBI-7265024">
        <id>Q8N3Z6</id>
    </interactant>
    <interactant intactId="EBI-8472129">
        <id>Q9HAQ2</id>
        <label>KIF9</label>
    </interactant>
    <organismsDiffer>false</organismsDiffer>
    <experiments>3</experiments>
</comment>
<comment type="interaction">
    <interactant intactId="EBI-7265024">
        <id>Q8N3Z6</id>
    </interactant>
    <interactant intactId="EBI-11955335">
        <id>Q5T753</id>
        <label>LCE1E</label>
    </interactant>
    <organismsDiffer>false</organismsDiffer>
    <experiments>3</experiments>
</comment>
<comment type="interaction">
    <interactant intactId="EBI-7265024">
        <id>Q8N3Z6</id>
    </interactant>
    <interactant intactId="EBI-11750983">
        <id>Q9HC98-4</id>
        <label>NEK6</label>
    </interactant>
    <organismsDiffer>false</organismsDiffer>
    <experiments>3</experiments>
</comment>
<comment type="interaction">
    <interactant intactId="EBI-7265024">
        <id>Q8N3Z6</id>
    </interactant>
    <interactant intactId="EBI-80140">
        <id>P63165</id>
        <label>SUMO1</label>
    </interactant>
    <organismsDiffer>false</organismsDiffer>
    <experiments>3</experiments>
</comment>
<comment type="interaction">
    <interactant intactId="EBI-7265024">
        <id>Q8N3Z6</id>
    </interactant>
    <interactant intactId="EBI-725997">
        <id>Q8WV44</id>
        <label>TRIM41</label>
    </interactant>
    <organismsDiffer>false</organismsDiffer>
    <experiments>3</experiments>
</comment>
<comment type="interaction">
    <interactant intactId="EBI-7265024">
        <id>Q8N3Z6</id>
    </interactant>
    <interactant intactId="EBI-80168">
        <id>P63279</id>
        <label>UBE2I</label>
    </interactant>
    <organismsDiffer>false</organismsDiffer>
    <experiments>3</experiments>
</comment>
<comment type="interaction">
    <interactant intactId="EBI-7265024">
        <id>Q8N3Z6</id>
    </interactant>
    <interactant intactId="EBI-10177272">
        <id>P15622-3</id>
        <label>ZNF250</label>
    </interactant>
    <organismsDiffer>false</organismsDiffer>
    <experiments>3</experiments>
</comment>
<comment type="interaction">
    <interactant intactId="EBI-7265024">
        <id>Q8N3Z6</id>
    </interactant>
    <interactant intactId="EBI-10243413">
        <id>Q59GP6</id>
    </interactant>
    <organismsDiffer>false</organismsDiffer>
    <experiments>3</experiments>
</comment>
<comment type="subcellular location">
    <subcellularLocation>
        <location evidence="3">Nucleus</location>
        <location evidence="3">Nucleolus</location>
    </subcellularLocation>
</comment>
<comment type="alternative products">
    <event type="alternative splicing"/>
    <isoform>
        <id>Q8N3Z6-1</id>
        <name>1</name>
        <sequence type="displayed"/>
    </isoform>
    <isoform>
        <id>Q8N3Z6-2</id>
        <name>2</name>
        <sequence type="described" ref="VSP_013841 VSP_013842"/>
    </isoform>
</comment>
<comment type="caution">
    <text evidence="5">It is uncertain whether Met-1 or Met-2 is the initiator.</text>
</comment>
<comment type="sequence caution" evidence="5">
    <conflict type="erroneous initiation">
        <sequence resource="EMBL-CDS" id="AAH36940"/>
    </conflict>
    <text>Truncated N-terminus.</text>
</comment>
<comment type="sequence caution" evidence="5">
    <conflict type="miscellaneous discrepancy">
        <sequence resource="EMBL-CDS" id="BAB15418"/>
    </conflict>
    <text>Contaminating sequence. Potential poly-A sequence.</text>
</comment>
<comment type="sequence caution" evidence="5">
    <conflict type="erroneous initiation">
        <sequence resource="EMBL-CDS" id="BAC11087"/>
    </conflict>
    <text>Truncated N-terminus.</text>
</comment>
<comment type="sequence caution" evidence="5">
    <conflict type="erroneous initiation">
        <sequence resource="EMBL-CDS" id="BAG37581"/>
    </conflict>
    <text>Truncated N-terminus.</text>
</comment>
<organism>
    <name type="scientific">Homo sapiens</name>
    <name type="common">Human</name>
    <dbReference type="NCBI Taxonomy" id="9606"/>
    <lineage>
        <taxon>Eukaryota</taxon>
        <taxon>Metazoa</taxon>
        <taxon>Chordata</taxon>
        <taxon>Craniata</taxon>
        <taxon>Vertebrata</taxon>
        <taxon>Euteleostomi</taxon>
        <taxon>Mammalia</taxon>
        <taxon>Eutheria</taxon>
        <taxon>Euarchontoglires</taxon>
        <taxon>Primates</taxon>
        <taxon>Haplorrhini</taxon>
        <taxon>Catarrhini</taxon>
        <taxon>Hominidae</taxon>
        <taxon>Homo</taxon>
    </lineage>
</organism>
<protein>
    <recommendedName>
        <fullName>Zinc finger CCHC domain-containing protein 7</fullName>
    </recommendedName>
    <alternativeName>
        <fullName>TRAMP-like complex RNA-binding factor ZCCHC7</fullName>
    </alternativeName>
</protein>
<name>ZCHC7_HUMAN</name>
<accession>Q8N3Z6</accession>
<accession>B2RCI4</accession>
<accession>D3DRQ0</accession>
<accession>Q5T0Q8</accession>
<accession>Q5T0Q9</accession>
<accession>Q5T0R0</accession>
<accession>Q8N2M1</accession>
<accession>Q8N4J2</accession>
<accession>Q8TBK8</accession>
<accession>Q9H648</accession>
<accession>Q9P0F0</accession>
<feature type="chain" id="PRO_0000150959" description="Zinc finger CCHC domain-containing protein 7">
    <location>
        <begin position="1"/>
        <end position="543"/>
    </location>
</feature>
<feature type="zinc finger region" description="CCHC-type 1" evidence="1">
    <location>
        <begin position="241"/>
        <end position="258"/>
    </location>
</feature>
<feature type="zinc finger region" description="CCHC-type 2" evidence="1">
    <location>
        <begin position="263"/>
        <end position="280"/>
    </location>
</feature>
<feature type="zinc finger region" description="CCHC-type 3" evidence="1">
    <location>
        <begin position="304"/>
        <end position="321"/>
    </location>
</feature>
<feature type="zinc finger region" description="CCHC-type 4" evidence="1">
    <location>
        <begin position="348"/>
        <end position="365"/>
    </location>
</feature>
<feature type="region of interest" description="Disordered" evidence="2">
    <location>
        <begin position="51"/>
        <end position="71"/>
    </location>
</feature>
<feature type="region of interest" description="Disordered" evidence="2">
    <location>
        <begin position="414"/>
        <end position="543"/>
    </location>
</feature>
<feature type="compositionally biased region" description="Low complexity" evidence="2">
    <location>
        <begin position="59"/>
        <end position="68"/>
    </location>
</feature>
<feature type="compositionally biased region" description="Basic and acidic residues" evidence="2">
    <location>
        <begin position="441"/>
        <end position="457"/>
    </location>
</feature>
<feature type="compositionally biased region" description="Basic and acidic residues" evidence="2">
    <location>
        <begin position="465"/>
        <end position="475"/>
    </location>
</feature>
<feature type="compositionally biased region" description="Polar residues" evidence="2">
    <location>
        <begin position="479"/>
        <end position="491"/>
    </location>
</feature>
<feature type="compositionally biased region" description="Basic residues" evidence="2">
    <location>
        <begin position="493"/>
        <end position="502"/>
    </location>
</feature>
<feature type="compositionally biased region" description="Basic and acidic residues" evidence="2">
    <location>
        <begin position="503"/>
        <end position="515"/>
    </location>
</feature>
<feature type="modified residue" description="Phosphoserine" evidence="6">
    <location>
        <position position="482"/>
    </location>
</feature>
<feature type="modified residue" description="Phosphoserine" evidence="7">
    <location>
        <position position="485"/>
    </location>
</feature>
<feature type="cross-link" description="Glycyl lysine isopeptide (Lys-Gly) (interchain with G-Cter in SUMO2)" evidence="10">
    <location>
        <position position="131"/>
    </location>
</feature>
<feature type="cross-link" description="Glycyl lysine isopeptide (Lys-Gly) (interchain with G-Cter in SUMO2)" evidence="10">
    <location>
        <position position="139"/>
    </location>
</feature>
<feature type="cross-link" description="Glycyl lysine isopeptide (Lys-Gly) (interchain with G-Cter in SUMO2)" evidence="10">
    <location>
        <position position="141"/>
    </location>
</feature>
<feature type="cross-link" description="Glycyl lysine isopeptide (Lys-Gly) (interchain with G-Cter in SUMO2)" evidence="10">
    <location>
        <position position="239"/>
    </location>
</feature>
<feature type="cross-link" description="Glycyl lysine isopeptide (Lys-Gly) (interchain with G-Cter in SUMO2)" evidence="10">
    <location>
        <position position="254"/>
    </location>
</feature>
<feature type="cross-link" description="Glycyl lysine isopeptide (Lys-Gly) (interchain with G-Cter in SUMO2)" evidence="10">
    <location>
        <position position="339"/>
    </location>
</feature>
<feature type="cross-link" description="Glycyl lysine isopeptide (Lys-Gly) (interchain with G-Cter in SUMO2)" evidence="10">
    <location>
        <position position="412"/>
    </location>
</feature>
<feature type="cross-link" description="Glycyl lysine isopeptide (Lys-Gly) (interchain with G-Cter in SUMO2)" evidence="8 9 10">
    <location>
        <position position="417"/>
    </location>
</feature>
<feature type="cross-link" description="Glycyl lysine isopeptide (Lys-Gly) (interchain with G-Cter in SUMO2)" evidence="10">
    <location>
        <position position="435"/>
    </location>
</feature>
<feature type="cross-link" description="Glycyl lysine isopeptide (Lys-Gly) (interchain with G-Cter in SUMO2)" evidence="10">
    <location>
        <position position="478"/>
    </location>
</feature>
<feature type="cross-link" description="Glycyl lysine isopeptide (Lys-Gly) (interchain with G-Cter in SUMO2)" evidence="10">
    <location>
        <position position="487"/>
    </location>
</feature>
<feature type="cross-link" description="Glycyl lysine isopeptide (Lys-Gly) (interchain with G-Cter in SUMO2)" evidence="10">
    <location>
        <position position="490"/>
    </location>
</feature>
<feature type="cross-link" description="Glycyl lysine isopeptide (Lys-Gly) (interchain with G-Cter in SUMO2)" evidence="10">
    <location>
        <position position="493"/>
    </location>
</feature>
<feature type="cross-link" description="Glycyl lysine isopeptide (Lys-Gly) (interchain with G-Cter in SUMO2)" evidence="10">
    <location>
        <position position="537"/>
    </location>
</feature>
<feature type="splice variant" id="VSP_013841" description="In isoform 2." evidence="4">
    <original>ED</original>
    <variation>QE</variation>
    <location>
        <begin position="205"/>
        <end position="206"/>
    </location>
</feature>
<feature type="splice variant" id="VSP_013842" description="In isoform 2." evidence="4">
    <location>
        <begin position="207"/>
        <end position="543"/>
    </location>
</feature>
<feature type="sequence variant" id="VAR_054958" description="In dbSNP:rs35119826.">
    <original>G</original>
    <variation>D</variation>
    <location>
        <position position="118"/>
    </location>
</feature>
<feature type="sequence variant" id="VAR_054959" description="In dbSNP:rs1051465.">
    <original>R</original>
    <variation>K</variation>
    <location>
        <position position="539"/>
    </location>
</feature>
<feature type="sequence conflict" description="In Ref. 1; BAB15418." evidence="5" ref="1">
    <original>F</original>
    <variation>L</variation>
    <location>
        <position position="3"/>
    </location>
</feature>
<feature type="sequence conflict" description="In Ref. 4; AAH22434." evidence="5" ref="4">
    <original>S</original>
    <variation>P</variation>
    <location>
        <position position="65"/>
    </location>
</feature>
<feature type="sequence conflict" description="In Ref. 1; BAC11087." evidence="5" ref="1">
    <original>D</original>
    <variation>G</variation>
    <location>
        <position position="214"/>
    </location>
</feature>
<feature type="sequence conflict" description="In Ref. 1; BAC11087." evidence="5" ref="1">
    <original>R</original>
    <variation>W</variation>
    <location>
        <position position="233"/>
    </location>
</feature>
<feature type="sequence conflict" description="In Ref. 1; BAC11087." evidence="5" ref="1">
    <original>N</original>
    <variation>D</variation>
    <location>
        <position position="443"/>
    </location>
</feature>
<keyword id="KW-0025">Alternative splicing</keyword>
<keyword id="KW-1017">Isopeptide bond</keyword>
<keyword id="KW-0479">Metal-binding</keyword>
<keyword id="KW-0539">Nucleus</keyword>
<keyword id="KW-0597">Phosphoprotein</keyword>
<keyword id="KW-1267">Proteomics identification</keyword>
<keyword id="KW-1185">Reference proteome</keyword>
<keyword id="KW-0677">Repeat</keyword>
<keyword id="KW-0832">Ubl conjugation</keyword>
<keyword id="KW-0862">Zinc</keyword>
<keyword id="KW-0863">Zinc-finger</keyword>
<reference key="1">
    <citation type="journal article" date="2004" name="Nat. Genet.">
        <title>Complete sequencing and characterization of 21,243 full-length human cDNAs.</title>
        <authorList>
            <person name="Ota T."/>
            <person name="Suzuki Y."/>
            <person name="Nishikawa T."/>
            <person name="Otsuki T."/>
            <person name="Sugiyama T."/>
            <person name="Irie R."/>
            <person name="Wakamatsu A."/>
            <person name="Hayashi K."/>
            <person name="Sato H."/>
            <person name="Nagai K."/>
            <person name="Kimura K."/>
            <person name="Makita H."/>
            <person name="Sekine M."/>
            <person name="Obayashi M."/>
            <person name="Nishi T."/>
            <person name="Shibahara T."/>
            <person name="Tanaka T."/>
            <person name="Ishii S."/>
            <person name="Yamamoto J."/>
            <person name="Saito K."/>
            <person name="Kawai Y."/>
            <person name="Isono Y."/>
            <person name="Nakamura Y."/>
            <person name="Nagahari K."/>
            <person name="Murakami K."/>
            <person name="Yasuda T."/>
            <person name="Iwayanagi T."/>
            <person name="Wagatsuma M."/>
            <person name="Shiratori A."/>
            <person name="Sudo H."/>
            <person name="Hosoiri T."/>
            <person name="Kaku Y."/>
            <person name="Kodaira H."/>
            <person name="Kondo H."/>
            <person name="Sugawara M."/>
            <person name="Takahashi M."/>
            <person name="Kanda K."/>
            <person name="Yokoi T."/>
            <person name="Furuya T."/>
            <person name="Kikkawa E."/>
            <person name="Omura Y."/>
            <person name="Abe K."/>
            <person name="Kamihara K."/>
            <person name="Katsuta N."/>
            <person name="Sato K."/>
            <person name="Tanikawa M."/>
            <person name="Yamazaki M."/>
            <person name="Ninomiya K."/>
            <person name="Ishibashi T."/>
            <person name="Yamashita H."/>
            <person name="Murakawa K."/>
            <person name="Fujimori K."/>
            <person name="Tanai H."/>
            <person name="Kimata M."/>
            <person name="Watanabe M."/>
            <person name="Hiraoka S."/>
            <person name="Chiba Y."/>
            <person name="Ishida S."/>
            <person name="Ono Y."/>
            <person name="Takiguchi S."/>
            <person name="Watanabe S."/>
            <person name="Yosida M."/>
            <person name="Hotuta T."/>
            <person name="Kusano J."/>
            <person name="Kanehori K."/>
            <person name="Takahashi-Fujii A."/>
            <person name="Hara H."/>
            <person name="Tanase T.-O."/>
            <person name="Nomura Y."/>
            <person name="Togiya S."/>
            <person name="Komai F."/>
            <person name="Hara R."/>
            <person name="Takeuchi K."/>
            <person name="Arita M."/>
            <person name="Imose N."/>
            <person name="Musashino K."/>
            <person name="Yuuki H."/>
            <person name="Oshima A."/>
            <person name="Sasaki N."/>
            <person name="Aotsuka S."/>
            <person name="Yoshikawa Y."/>
            <person name="Matsunawa H."/>
            <person name="Ichihara T."/>
            <person name="Shiohata N."/>
            <person name="Sano S."/>
            <person name="Moriya S."/>
            <person name="Momiyama H."/>
            <person name="Satoh N."/>
            <person name="Takami S."/>
            <person name="Terashima Y."/>
            <person name="Suzuki O."/>
            <person name="Nakagawa S."/>
            <person name="Senoh A."/>
            <person name="Mizoguchi H."/>
            <person name="Goto Y."/>
            <person name="Shimizu F."/>
            <person name="Wakebe H."/>
            <person name="Hishigaki H."/>
            <person name="Watanabe T."/>
            <person name="Sugiyama A."/>
            <person name="Takemoto M."/>
            <person name="Kawakami B."/>
            <person name="Yamazaki M."/>
            <person name="Watanabe K."/>
            <person name="Kumagai A."/>
            <person name="Itakura S."/>
            <person name="Fukuzumi Y."/>
            <person name="Fujimori Y."/>
            <person name="Komiyama M."/>
            <person name="Tashiro H."/>
            <person name="Tanigami A."/>
            <person name="Fujiwara T."/>
            <person name="Ono T."/>
            <person name="Yamada K."/>
            <person name="Fujii Y."/>
            <person name="Ozaki K."/>
            <person name="Hirao M."/>
            <person name="Ohmori Y."/>
            <person name="Kawabata A."/>
            <person name="Hikiji T."/>
            <person name="Kobatake N."/>
            <person name="Inagaki H."/>
            <person name="Ikema Y."/>
            <person name="Okamoto S."/>
            <person name="Okitani R."/>
            <person name="Kawakami T."/>
            <person name="Noguchi S."/>
            <person name="Itoh T."/>
            <person name="Shigeta K."/>
            <person name="Senba T."/>
            <person name="Matsumura K."/>
            <person name="Nakajima Y."/>
            <person name="Mizuno T."/>
            <person name="Morinaga M."/>
            <person name="Sasaki M."/>
            <person name="Togashi T."/>
            <person name="Oyama M."/>
            <person name="Hata H."/>
            <person name="Watanabe M."/>
            <person name="Komatsu T."/>
            <person name="Mizushima-Sugano J."/>
            <person name="Satoh T."/>
            <person name="Shirai Y."/>
            <person name="Takahashi Y."/>
            <person name="Nakagawa K."/>
            <person name="Okumura K."/>
            <person name="Nagase T."/>
            <person name="Nomura N."/>
            <person name="Kikuchi H."/>
            <person name="Masuho Y."/>
            <person name="Yamashita R."/>
            <person name="Nakai K."/>
            <person name="Yada T."/>
            <person name="Nakamura Y."/>
            <person name="Ohara O."/>
            <person name="Isogai T."/>
            <person name="Sugano S."/>
        </authorList>
    </citation>
    <scope>NUCLEOTIDE SEQUENCE [LARGE SCALE MRNA] (ISOFORM 1)</scope>
    <source>
        <tissue>Embryo</tissue>
        <tissue>Small intestine</tissue>
    </source>
</reference>
<reference key="2">
    <citation type="journal article" date="2004" name="Nature">
        <title>DNA sequence and analysis of human chromosome 9.</title>
        <authorList>
            <person name="Humphray S.J."/>
            <person name="Oliver K."/>
            <person name="Hunt A.R."/>
            <person name="Plumb R.W."/>
            <person name="Loveland J.E."/>
            <person name="Howe K.L."/>
            <person name="Andrews T.D."/>
            <person name="Searle S."/>
            <person name="Hunt S.E."/>
            <person name="Scott C.E."/>
            <person name="Jones M.C."/>
            <person name="Ainscough R."/>
            <person name="Almeida J.P."/>
            <person name="Ambrose K.D."/>
            <person name="Ashwell R.I.S."/>
            <person name="Babbage A.K."/>
            <person name="Babbage S."/>
            <person name="Bagguley C.L."/>
            <person name="Bailey J."/>
            <person name="Banerjee R."/>
            <person name="Barker D.J."/>
            <person name="Barlow K.F."/>
            <person name="Bates K."/>
            <person name="Beasley H."/>
            <person name="Beasley O."/>
            <person name="Bird C.P."/>
            <person name="Bray-Allen S."/>
            <person name="Brown A.J."/>
            <person name="Brown J.Y."/>
            <person name="Burford D."/>
            <person name="Burrill W."/>
            <person name="Burton J."/>
            <person name="Carder C."/>
            <person name="Carter N.P."/>
            <person name="Chapman J.C."/>
            <person name="Chen Y."/>
            <person name="Clarke G."/>
            <person name="Clark S.Y."/>
            <person name="Clee C.M."/>
            <person name="Clegg S."/>
            <person name="Collier R.E."/>
            <person name="Corby N."/>
            <person name="Crosier M."/>
            <person name="Cummings A.T."/>
            <person name="Davies J."/>
            <person name="Dhami P."/>
            <person name="Dunn M."/>
            <person name="Dutta I."/>
            <person name="Dyer L.W."/>
            <person name="Earthrowl M.E."/>
            <person name="Faulkner L."/>
            <person name="Fleming C.J."/>
            <person name="Frankish A."/>
            <person name="Frankland J.A."/>
            <person name="French L."/>
            <person name="Fricker D.G."/>
            <person name="Garner P."/>
            <person name="Garnett J."/>
            <person name="Ghori J."/>
            <person name="Gilbert J.G.R."/>
            <person name="Glison C."/>
            <person name="Grafham D.V."/>
            <person name="Gribble S."/>
            <person name="Griffiths C."/>
            <person name="Griffiths-Jones S."/>
            <person name="Grocock R."/>
            <person name="Guy J."/>
            <person name="Hall R.E."/>
            <person name="Hammond S."/>
            <person name="Harley J.L."/>
            <person name="Harrison E.S.I."/>
            <person name="Hart E.A."/>
            <person name="Heath P.D."/>
            <person name="Henderson C.D."/>
            <person name="Hopkins B.L."/>
            <person name="Howard P.J."/>
            <person name="Howden P.J."/>
            <person name="Huckle E."/>
            <person name="Johnson C."/>
            <person name="Johnson D."/>
            <person name="Joy A.A."/>
            <person name="Kay M."/>
            <person name="Keenan S."/>
            <person name="Kershaw J.K."/>
            <person name="Kimberley A.M."/>
            <person name="King A."/>
            <person name="Knights A."/>
            <person name="Laird G.K."/>
            <person name="Langford C."/>
            <person name="Lawlor S."/>
            <person name="Leongamornlert D.A."/>
            <person name="Leversha M."/>
            <person name="Lloyd C."/>
            <person name="Lloyd D.M."/>
            <person name="Lovell J."/>
            <person name="Martin S."/>
            <person name="Mashreghi-Mohammadi M."/>
            <person name="Matthews L."/>
            <person name="McLaren S."/>
            <person name="McLay K.E."/>
            <person name="McMurray A."/>
            <person name="Milne S."/>
            <person name="Nickerson T."/>
            <person name="Nisbett J."/>
            <person name="Nordsiek G."/>
            <person name="Pearce A.V."/>
            <person name="Peck A.I."/>
            <person name="Porter K.M."/>
            <person name="Pandian R."/>
            <person name="Pelan S."/>
            <person name="Phillimore B."/>
            <person name="Povey S."/>
            <person name="Ramsey Y."/>
            <person name="Rand V."/>
            <person name="Scharfe M."/>
            <person name="Sehra H.K."/>
            <person name="Shownkeen R."/>
            <person name="Sims S.K."/>
            <person name="Skuce C.D."/>
            <person name="Smith M."/>
            <person name="Steward C.A."/>
            <person name="Swarbreck D."/>
            <person name="Sycamore N."/>
            <person name="Tester J."/>
            <person name="Thorpe A."/>
            <person name="Tracey A."/>
            <person name="Tromans A."/>
            <person name="Thomas D.W."/>
            <person name="Wall M."/>
            <person name="Wallis J.M."/>
            <person name="West A.P."/>
            <person name="Whitehead S.L."/>
            <person name="Willey D.L."/>
            <person name="Williams S.A."/>
            <person name="Wilming L."/>
            <person name="Wray P.W."/>
            <person name="Young L."/>
            <person name="Ashurst J.L."/>
            <person name="Coulson A."/>
            <person name="Blocker H."/>
            <person name="Durbin R.M."/>
            <person name="Sulston J.E."/>
            <person name="Hubbard T."/>
            <person name="Jackson M.J."/>
            <person name="Bentley D.R."/>
            <person name="Beck S."/>
            <person name="Rogers J."/>
            <person name="Dunham I."/>
        </authorList>
    </citation>
    <scope>NUCLEOTIDE SEQUENCE [LARGE SCALE GENOMIC DNA]</scope>
</reference>
<reference key="3">
    <citation type="submission" date="2005-09" db="EMBL/GenBank/DDBJ databases">
        <authorList>
            <person name="Mural R.J."/>
            <person name="Istrail S."/>
            <person name="Sutton G.G."/>
            <person name="Florea L."/>
            <person name="Halpern A.L."/>
            <person name="Mobarry C.M."/>
            <person name="Lippert R."/>
            <person name="Walenz B."/>
            <person name="Shatkay H."/>
            <person name="Dew I."/>
            <person name="Miller J.R."/>
            <person name="Flanigan M.J."/>
            <person name="Edwards N.J."/>
            <person name="Bolanos R."/>
            <person name="Fasulo D."/>
            <person name="Halldorsson B.V."/>
            <person name="Hannenhalli S."/>
            <person name="Turner R."/>
            <person name="Yooseph S."/>
            <person name="Lu F."/>
            <person name="Nusskern D.R."/>
            <person name="Shue B.C."/>
            <person name="Zheng X.H."/>
            <person name="Zhong F."/>
            <person name="Delcher A.L."/>
            <person name="Huson D.H."/>
            <person name="Kravitz S.A."/>
            <person name="Mouchard L."/>
            <person name="Reinert K."/>
            <person name="Remington K.A."/>
            <person name="Clark A.G."/>
            <person name="Waterman M.S."/>
            <person name="Eichler E.E."/>
            <person name="Adams M.D."/>
            <person name="Hunkapiller M.W."/>
            <person name="Myers E.W."/>
            <person name="Venter J.C."/>
        </authorList>
    </citation>
    <scope>NUCLEOTIDE SEQUENCE [LARGE SCALE GENOMIC DNA]</scope>
</reference>
<reference key="4">
    <citation type="journal article" date="2004" name="Genome Res.">
        <title>The status, quality, and expansion of the NIH full-length cDNA project: the Mammalian Gene Collection (MGC).</title>
        <authorList>
            <consortium name="The MGC Project Team"/>
        </authorList>
    </citation>
    <scope>NUCLEOTIDE SEQUENCE [LARGE SCALE MRNA] (ISOFORMS 1 AND 2)</scope>
    <source>
        <tissue>Brain</tissue>
        <tissue>Mammary gland</tissue>
    </source>
</reference>
<reference key="5">
    <citation type="submission" date="1999-05" db="EMBL/GenBank/DDBJ databases">
        <title>Human partial CDS from CD34+ stem cells.</title>
        <authorList>
            <person name="Ye M."/>
            <person name="Zhang Q.-H."/>
            <person name="Zhou J."/>
            <person name="Shen Y."/>
            <person name="Wu X.-Y."/>
            <person name="Guan Z.Q."/>
            <person name="Wang L."/>
            <person name="Fan H.-Y."/>
            <person name="Mao Y.-F."/>
            <person name="Dai M."/>
            <person name="Huang Q.-H."/>
            <person name="Chen S.-J."/>
            <person name="Chen Z."/>
        </authorList>
    </citation>
    <scope>NUCLEOTIDE SEQUENCE [LARGE SCALE MRNA] OF 340-446</scope>
    <source>
        <tissue>Umbilical cord blood</tissue>
    </source>
</reference>
<reference key="6">
    <citation type="journal article" date="2008" name="Proc. Natl. Acad. Sci. U.S.A.">
        <title>A quantitative atlas of mitotic phosphorylation.</title>
        <authorList>
            <person name="Dephoure N."/>
            <person name="Zhou C."/>
            <person name="Villen J."/>
            <person name="Beausoleil S.A."/>
            <person name="Bakalarski C.E."/>
            <person name="Elledge S.J."/>
            <person name="Gygi S.P."/>
        </authorList>
    </citation>
    <scope>PHOSPHORYLATION [LARGE SCALE ANALYSIS] AT SER-482</scope>
    <scope>IDENTIFICATION BY MASS SPECTROMETRY [LARGE SCALE ANALYSIS]</scope>
    <source>
        <tissue>Cervix carcinoma</tissue>
    </source>
</reference>
<reference key="7">
    <citation type="journal article" date="2011" name="Mol. Cell">
        <title>Interaction profiling identifies the human nuclear exosome targeting complex.</title>
        <authorList>
            <person name="Lubas M."/>
            <person name="Christensen M.S."/>
            <person name="Kristiansen M.S."/>
            <person name="Domanski M."/>
            <person name="Falkenby L.G."/>
            <person name="Lykke-Andersen S."/>
            <person name="Andersen J.S."/>
            <person name="Dziembowski A."/>
            <person name="Jensen T.H."/>
        </authorList>
    </citation>
    <scope>IDENTIFICATION IN A TRAMP-LIKE COMPLEX</scope>
    <scope>SUBUNIT</scope>
    <scope>SUBCELLULAR LOCATION</scope>
</reference>
<reference key="8">
    <citation type="journal article" date="2012" name="Biochem. Soc. Trans.">
        <title>Comparison of the yeast and human nuclear exosome complexes.</title>
        <authorList>
            <person name="Sloan K.E."/>
            <person name="Schneider C."/>
            <person name="Watkins N.J."/>
        </authorList>
    </citation>
    <scope>REVIEW ON RNA EXOSOMES</scope>
</reference>
<reference key="9">
    <citation type="journal article" date="2013" name="J. Proteome Res.">
        <title>Toward a comprehensive characterization of a human cancer cell phosphoproteome.</title>
        <authorList>
            <person name="Zhou H."/>
            <person name="Di Palma S."/>
            <person name="Preisinger C."/>
            <person name="Peng M."/>
            <person name="Polat A.N."/>
            <person name="Heck A.J."/>
            <person name="Mohammed S."/>
        </authorList>
    </citation>
    <scope>PHOSPHORYLATION [LARGE SCALE ANALYSIS] AT SER-485</scope>
    <scope>IDENTIFICATION BY MASS SPECTROMETRY [LARGE SCALE ANALYSIS]</scope>
    <source>
        <tissue>Erythroleukemia</tissue>
    </source>
</reference>
<reference key="10">
    <citation type="journal article" date="2014" name="Nat. Struct. Mol. Biol.">
        <title>Uncovering global SUMOylation signaling networks in a site-specific manner.</title>
        <authorList>
            <person name="Hendriks I.A."/>
            <person name="D'Souza R.C."/>
            <person name="Yang B."/>
            <person name="Verlaan-de Vries M."/>
            <person name="Mann M."/>
            <person name="Vertegaal A.C."/>
        </authorList>
    </citation>
    <scope>SUMOYLATION [LARGE SCALE ANALYSIS] AT LYS-417</scope>
    <scope>IDENTIFICATION BY MASS SPECTROMETRY [LARGE SCALE ANALYSIS]</scope>
</reference>
<reference key="11">
    <citation type="journal article" date="2015" name="Cell Rep.">
        <title>SUMO-2 orchestrates chromatin modifiers in response to DNA damage.</title>
        <authorList>
            <person name="Hendriks I.A."/>
            <person name="Treffers L.W."/>
            <person name="Verlaan-de Vries M."/>
            <person name="Olsen J.V."/>
            <person name="Vertegaal A.C."/>
        </authorList>
    </citation>
    <scope>SUMOYLATION [LARGE SCALE ANALYSIS] AT LYS-417</scope>
    <scope>IDENTIFICATION BY MASS SPECTROMETRY [LARGE SCALE ANALYSIS]</scope>
</reference>
<reference key="12">
    <citation type="journal article" date="2017" name="Nat. Struct. Mol. Biol.">
        <title>Site-specific mapping of the human SUMO proteome reveals co-modification with phosphorylation.</title>
        <authorList>
            <person name="Hendriks I.A."/>
            <person name="Lyon D."/>
            <person name="Young C."/>
            <person name="Jensen L.J."/>
            <person name="Vertegaal A.C."/>
            <person name="Nielsen M.L."/>
        </authorList>
    </citation>
    <scope>SUMOYLATION [LARGE SCALE ANALYSIS] AT LYS-131; LYS-139; LYS-141; LYS-239; LYS-254; LYS-339; LYS-412; LYS-417; LYS-435; LYS-478; LYS-487; LYS-490; LYS-493 AND LYS-537</scope>
    <scope>IDENTIFICATION BY MASS SPECTROMETRY [LARGE SCALE ANALYSIS]</scope>
</reference>
<sequence length="543" mass="63052">MMFGGYETIEAYEDDLYRDESSSELSVDSEVEFQLYSQIHYAQDLDDVIREEEHEEKNSGNSESSSSKPNQKKLIVLSDSEVIQLSDGSEVITLSDEDSIYRCKGKNVRVQAQENAHGLSSSLQSNELVDKKCKSDIEKPKSEERSGVIREVMIIEVSSSEEEESTISEGDNVESWMLLGCEVDDKDDDILLNLVGCENSVTEGEDGINWSISDKDIEAQIANNRTPGRWTQRYYSANKNIICRNCDKRGHLSKNCPLPRKVRRCFLCSRRGHLLYSCPAPLCEYCPVPKMLDHSCLFRHSWDKQCDRCHMLGHYTDACTEIWRQYHLTTKPGPPKKPKTPSRPSALAYCYHCAQKGHYGHECPEREVYDPSPVSPFICYYDDKYEIQEREKRLKQKIKVLKKNGVIPEPSKLPYIKAANENPHHDIRKGRASWKSNRWPQENKETQKEMKNKNRNWEKHRKADRHREVDEDFPRGPKTYSSPGSFKTQKPSKPFHRSSHYHTSREDKSPKEGKRGKQKKKERCWEDDDNDNLFLIKQRKKKS</sequence>
<proteinExistence type="evidence at protein level"/>
<evidence type="ECO:0000255" key="1">
    <source>
        <dbReference type="PROSITE-ProRule" id="PRU00047"/>
    </source>
</evidence>
<evidence type="ECO:0000256" key="2">
    <source>
        <dbReference type="SAM" id="MobiDB-lite"/>
    </source>
</evidence>
<evidence type="ECO:0000269" key="3">
    <source>
    </source>
</evidence>
<evidence type="ECO:0000303" key="4">
    <source>
    </source>
</evidence>
<evidence type="ECO:0000305" key="5"/>
<evidence type="ECO:0007744" key="6">
    <source>
    </source>
</evidence>
<evidence type="ECO:0007744" key="7">
    <source>
    </source>
</evidence>
<evidence type="ECO:0007744" key="8">
    <source>
    </source>
</evidence>
<evidence type="ECO:0007744" key="9">
    <source>
    </source>
</evidence>
<evidence type="ECO:0007744" key="10">
    <source>
    </source>
</evidence>